<protein>
    <recommendedName>
        <fullName evidence="1">dTTP/UTP pyrophosphatase</fullName>
        <shortName evidence="1">dTTPase/UTPase</shortName>
        <ecNumber evidence="1">3.6.1.9</ecNumber>
    </recommendedName>
    <alternativeName>
        <fullName evidence="1">Nucleoside triphosphate pyrophosphatase</fullName>
    </alternativeName>
    <alternativeName>
        <fullName evidence="1">Nucleotide pyrophosphatase</fullName>
        <shortName evidence="1">Nucleotide PPase</shortName>
    </alternativeName>
</protein>
<keyword id="KW-0963">Cytoplasm</keyword>
<keyword id="KW-0378">Hydrolase</keyword>
<keyword id="KW-0546">Nucleotide metabolism</keyword>
<sequence>MTSLYLASGSPRRQELLAQLGVTFERIVTGIEEQRQPQESAQQYVVRLAREKAQAGVAQTAQDLPVLGADTIVILNGEVLEKPRDAEHAAQMLRKLSGQTHQVMTAVALADSQHILDCLVVTDVTFRTLTDEDIAGYVASGEPLDKAGAYGIQGLGGCFVRKINGSFHAVVGLPLVETYELLSNFNALREKRDKHDG</sequence>
<reference key="1">
    <citation type="journal article" date="2006" name="Proc. Natl. Acad. Sci. U.S.A.">
        <title>Identification of genes subject to positive selection in uropathogenic strains of Escherichia coli: a comparative genomics approach.</title>
        <authorList>
            <person name="Chen S.L."/>
            <person name="Hung C.-S."/>
            <person name="Xu J."/>
            <person name="Reigstad C.S."/>
            <person name="Magrini V."/>
            <person name="Sabo A."/>
            <person name="Blasiar D."/>
            <person name="Bieri T."/>
            <person name="Meyer R.R."/>
            <person name="Ozersky P."/>
            <person name="Armstrong J.R."/>
            <person name="Fulton R.S."/>
            <person name="Latreille J.P."/>
            <person name="Spieth J."/>
            <person name="Hooton T.M."/>
            <person name="Mardis E.R."/>
            <person name="Hultgren S.J."/>
            <person name="Gordon J.I."/>
        </authorList>
    </citation>
    <scope>NUCLEOTIDE SEQUENCE [LARGE SCALE GENOMIC DNA]</scope>
    <source>
        <strain>UTI89 / UPEC</strain>
    </source>
</reference>
<accession>Q1R692</accession>
<gene>
    <name type="primary">yceF2</name>
    <name type="ordered locus">UTI89_C3678</name>
</gene>
<feature type="chain" id="PRO_0000267309" description="dTTP/UTP pyrophosphatase">
    <location>
        <begin position="1"/>
        <end position="197"/>
    </location>
</feature>
<feature type="active site" description="Proton acceptor" evidence="1">
    <location>
        <position position="70"/>
    </location>
</feature>
<feature type="site" description="Important for substrate specificity" evidence="1">
    <location>
        <position position="12"/>
    </location>
</feature>
<feature type="site" description="Important for substrate specificity" evidence="1">
    <location>
        <position position="71"/>
    </location>
</feature>
<feature type="site" description="Important for substrate specificity" evidence="1">
    <location>
        <position position="153"/>
    </location>
</feature>
<evidence type="ECO:0000255" key="1">
    <source>
        <dbReference type="HAMAP-Rule" id="MF_00528"/>
    </source>
</evidence>
<organism>
    <name type="scientific">Escherichia coli (strain UTI89 / UPEC)</name>
    <dbReference type="NCBI Taxonomy" id="364106"/>
    <lineage>
        <taxon>Bacteria</taxon>
        <taxon>Pseudomonadati</taxon>
        <taxon>Pseudomonadota</taxon>
        <taxon>Gammaproteobacteria</taxon>
        <taxon>Enterobacterales</taxon>
        <taxon>Enterobacteriaceae</taxon>
        <taxon>Escherichia</taxon>
    </lineage>
</organism>
<proteinExistence type="inferred from homology"/>
<comment type="function">
    <text evidence="1">Nucleoside triphosphate pyrophosphatase that hydrolyzes dTTP and UTP. May have a dual role in cell division arrest and in preventing the incorporation of modified nucleotides into cellular nucleic acids.</text>
</comment>
<comment type="catalytic activity">
    <reaction evidence="1">
        <text>dTTP + H2O = dTMP + diphosphate + H(+)</text>
        <dbReference type="Rhea" id="RHEA:28534"/>
        <dbReference type="ChEBI" id="CHEBI:15377"/>
        <dbReference type="ChEBI" id="CHEBI:15378"/>
        <dbReference type="ChEBI" id="CHEBI:33019"/>
        <dbReference type="ChEBI" id="CHEBI:37568"/>
        <dbReference type="ChEBI" id="CHEBI:63528"/>
        <dbReference type="EC" id="3.6.1.9"/>
    </reaction>
</comment>
<comment type="catalytic activity">
    <reaction evidence="1">
        <text>UTP + H2O = UMP + diphosphate + H(+)</text>
        <dbReference type="Rhea" id="RHEA:29395"/>
        <dbReference type="ChEBI" id="CHEBI:15377"/>
        <dbReference type="ChEBI" id="CHEBI:15378"/>
        <dbReference type="ChEBI" id="CHEBI:33019"/>
        <dbReference type="ChEBI" id="CHEBI:46398"/>
        <dbReference type="ChEBI" id="CHEBI:57865"/>
        <dbReference type="EC" id="3.6.1.9"/>
    </reaction>
</comment>
<comment type="cofactor">
    <cofactor evidence="1">
        <name>a divalent metal cation</name>
        <dbReference type="ChEBI" id="CHEBI:60240"/>
    </cofactor>
</comment>
<comment type="subcellular location">
    <subcellularLocation>
        <location evidence="1">Cytoplasm</location>
    </subcellularLocation>
</comment>
<comment type="similarity">
    <text evidence="1">Belongs to the Maf family. YhdE subfamily.</text>
</comment>
<dbReference type="EC" id="3.6.1.9" evidence="1"/>
<dbReference type="EMBL" id="CP000243">
    <property type="protein sequence ID" value="ABE09122.1"/>
    <property type="molecule type" value="Genomic_DNA"/>
</dbReference>
<dbReference type="SMR" id="Q1R692"/>
<dbReference type="KEGG" id="eci:UTI89_C3678"/>
<dbReference type="HOGENOM" id="CLU_040416_2_1_6"/>
<dbReference type="Proteomes" id="UP000001952">
    <property type="component" value="Chromosome"/>
</dbReference>
<dbReference type="GO" id="GO:0005737">
    <property type="term" value="C:cytoplasm"/>
    <property type="evidence" value="ECO:0007669"/>
    <property type="project" value="UniProtKB-SubCell"/>
</dbReference>
<dbReference type="GO" id="GO:0036218">
    <property type="term" value="F:dTTP diphosphatase activity"/>
    <property type="evidence" value="ECO:0007669"/>
    <property type="project" value="RHEA"/>
</dbReference>
<dbReference type="GO" id="GO:0036221">
    <property type="term" value="F:UTP diphosphatase activity"/>
    <property type="evidence" value="ECO:0007669"/>
    <property type="project" value="RHEA"/>
</dbReference>
<dbReference type="GO" id="GO:0009117">
    <property type="term" value="P:nucleotide metabolic process"/>
    <property type="evidence" value="ECO:0007669"/>
    <property type="project" value="UniProtKB-KW"/>
</dbReference>
<dbReference type="CDD" id="cd00555">
    <property type="entry name" value="Maf"/>
    <property type="match status" value="1"/>
</dbReference>
<dbReference type="FunFam" id="3.90.950.10:FF:000004">
    <property type="entry name" value="dTTP/UTP pyrophosphatase"/>
    <property type="match status" value="1"/>
</dbReference>
<dbReference type="Gene3D" id="3.90.950.10">
    <property type="match status" value="1"/>
</dbReference>
<dbReference type="HAMAP" id="MF_00528">
    <property type="entry name" value="Maf"/>
    <property type="match status" value="1"/>
</dbReference>
<dbReference type="InterPro" id="IPR029001">
    <property type="entry name" value="ITPase-like_fam"/>
</dbReference>
<dbReference type="InterPro" id="IPR003697">
    <property type="entry name" value="Maf-like"/>
</dbReference>
<dbReference type="NCBIfam" id="TIGR00172">
    <property type="entry name" value="maf"/>
    <property type="match status" value="1"/>
</dbReference>
<dbReference type="PANTHER" id="PTHR43213">
    <property type="entry name" value="BIFUNCTIONAL DTTP/UTP PYROPHOSPHATASE/METHYLTRANSFERASE PROTEIN-RELATED"/>
    <property type="match status" value="1"/>
</dbReference>
<dbReference type="PANTHER" id="PTHR43213:SF5">
    <property type="entry name" value="BIFUNCTIONAL DTTP_UTP PYROPHOSPHATASE_METHYLTRANSFERASE PROTEIN-RELATED"/>
    <property type="match status" value="1"/>
</dbReference>
<dbReference type="Pfam" id="PF02545">
    <property type="entry name" value="Maf"/>
    <property type="match status" value="1"/>
</dbReference>
<dbReference type="PIRSF" id="PIRSF006305">
    <property type="entry name" value="Maf"/>
    <property type="match status" value="1"/>
</dbReference>
<dbReference type="SUPFAM" id="SSF52972">
    <property type="entry name" value="ITPase-like"/>
    <property type="match status" value="1"/>
</dbReference>
<name>NTPPA_ECOUT</name>